<reference key="1">
    <citation type="journal article" date="2006" name="Proc. Natl. Acad. Sci. U.S.A.">
        <title>Comparative genomics of the lactic acid bacteria.</title>
        <authorList>
            <person name="Makarova K.S."/>
            <person name="Slesarev A."/>
            <person name="Wolf Y.I."/>
            <person name="Sorokin A."/>
            <person name="Mirkin B."/>
            <person name="Koonin E.V."/>
            <person name="Pavlov A."/>
            <person name="Pavlova N."/>
            <person name="Karamychev V."/>
            <person name="Polouchine N."/>
            <person name="Shakhova V."/>
            <person name="Grigoriev I."/>
            <person name="Lou Y."/>
            <person name="Rohksar D."/>
            <person name="Lucas S."/>
            <person name="Huang K."/>
            <person name="Goodstein D.M."/>
            <person name="Hawkins T."/>
            <person name="Plengvidhya V."/>
            <person name="Welker D."/>
            <person name="Hughes J."/>
            <person name="Goh Y."/>
            <person name="Benson A."/>
            <person name="Baldwin K."/>
            <person name="Lee J.-H."/>
            <person name="Diaz-Muniz I."/>
            <person name="Dosti B."/>
            <person name="Smeianov V."/>
            <person name="Wechter W."/>
            <person name="Barabote R."/>
            <person name="Lorca G."/>
            <person name="Altermann E."/>
            <person name="Barrangou R."/>
            <person name="Ganesan B."/>
            <person name="Xie Y."/>
            <person name="Rawsthorne H."/>
            <person name="Tamir D."/>
            <person name="Parker C."/>
            <person name="Breidt F."/>
            <person name="Broadbent J.R."/>
            <person name="Hutkins R."/>
            <person name="O'Sullivan D."/>
            <person name="Steele J."/>
            <person name="Unlu G."/>
            <person name="Saier M.H. Jr."/>
            <person name="Klaenhammer T."/>
            <person name="Richardson P."/>
            <person name="Kozyavkin S."/>
            <person name="Weimer B.C."/>
            <person name="Mills D.A."/>
        </authorList>
    </citation>
    <scope>NUCLEOTIDE SEQUENCE [LARGE SCALE GENOMIC DNA]</scope>
    <source>
        <strain>ATCC 8293 / DSM 20343 / BCRC 11652 / CCM 1803 / JCM 6124 / NCDO 523 / NBRC 100496 / NCIMB 8023 / NCTC 12954 / NRRL B-1118 / 37Y</strain>
    </source>
</reference>
<sequence length="264" mass="29569">MKIAIFNNHAEHSVIIAKKLILAMKKNNVDIDDRNPDIVVSVGGDGTLLGAFQKYVDQTESVRFVGLHTGHLGFYTDWLSTELDQFVDSLIHDNGQKVSYPLLELTVVRTSGESYKFLALNEAVIKQPIGTLVADIYLGGQAFERFRGDGIAVATPTGSTAYNKANGGAVLHPSLPAIQMSEIASINNRVFRTLGSPLIVPQDQEIVMKPKSNHFLVMYDQEEIKGHNITELRFKVSEKRVHFAQYRHVDFWRRVQNAFISEIE</sequence>
<feature type="chain" id="PRO_1000059876" description="NAD kinase">
    <location>
        <begin position="1"/>
        <end position="264"/>
    </location>
</feature>
<feature type="active site" description="Proton acceptor" evidence="1">
    <location>
        <position position="45"/>
    </location>
</feature>
<feature type="binding site" evidence="1">
    <location>
        <begin position="45"/>
        <end position="46"/>
    </location>
    <ligand>
        <name>NAD(+)</name>
        <dbReference type="ChEBI" id="CHEBI:57540"/>
    </ligand>
</feature>
<feature type="binding site" evidence="1">
    <location>
        <begin position="121"/>
        <end position="122"/>
    </location>
    <ligand>
        <name>NAD(+)</name>
        <dbReference type="ChEBI" id="CHEBI:57540"/>
    </ligand>
</feature>
<feature type="binding site" evidence="1">
    <location>
        <position position="147"/>
    </location>
    <ligand>
        <name>NAD(+)</name>
        <dbReference type="ChEBI" id="CHEBI:57540"/>
    </ligand>
</feature>
<feature type="binding site" evidence="1">
    <location>
        <position position="149"/>
    </location>
    <ligand>
        <name>NAD(+)</name>
        <dbReference type="ChEBI" id="CHEBI:57540"/>
    </ligand>
</feature>
<feature type="binding site" evidence="1">
    <location>
        <position position="184"/>
    </location>
    <ligand>
        <name>NAD(+)</name>
        <dbReference type="ChEBI" id="CHEBI:57540"/>
    </ligand>
</feature>
<feature type="binding site" evidence="1">
    <location>
        <position position="221"/>
    </location>
    <ligand>
        <name>NAD(+)</name>
        <dbReference type="ChEBI" id="CHEBI:57540"/>
    </ligand>
</feature>
<accession>Q03YD3</accession>
<gene>
    <name evidence="1" type="primary">nadK</name>
    <name type="ordered locus">LEUM_0679</name>
</gene>
<protein>
    <recommendedName>
        <fullName evidence="1">NAD kinase</fullName>
        <ecNumber evidence="1">2.7.1.23</ecNumber>
    </recommendedName>
    <alternativeName>
        <fullName evidence="1">ATP-dependent NAD kinase</fullName>
    </alternativeName>
</protein>
<organism>
    <name type="scientific">Leuconostoc mesenteroides subsp. mesenteroides (strain ATCC 8293 / DSM 20343 / BCRC 11652 / CCM 1803 / JCM 6124 / NCDO 523 / NBRC 100496 / NCIMB 8023 / NCTC 12954 / NRRL B-1118 / 37Y)</name>
    <dbReference type="NCBI Taxonomy" id="203120"/>
    <lineage>
        <taxon>Bacteria</taxon>
        <taxon>Bacillati</taxon>
        <taxon>Bacillota</taxon>
        <taxon>Bacilli</taxon>
        <taxon>Lactobacillales</taxon>
        <taxon>Lactobacillaceae</taxon>
        <taxon>Leuconostoc</taxon>
    </lineage>
</organism>
<keyword id="KW-0067">ATP-binding</keyword>
<keyword id="KW-0963">Cytoplasm</keyword>
<keyword id="KW-0418">Kinase</keyword>
<keyword id="KW-0520">NAD</keyword>
<keyword id="KW-0521">NADP</keyword>
<keyword id="KW-0547">Nucleotide-binding</keyword>
<keyword id="KW-1185">Reference proteome</keyword>
<keyword id="KW-0808">Transferase</keyword>
<proteinExistence type="inferred from homology"/>
<name>NADK_LEUMM</name>
<evidence type="ECO:0000255" key="1">
    <source>
        <dbReference type="HAMAP-Rule" id="MF_00361"/>
    </source>
</evidence>
<dbReference type="EC" id="2.7.1.23" evidence="1"/>
<dbReference type="EMBL" id="CP000414">
    <property type="protein sequence ID" value="ABJ61789.1"/>
    <property type="molecule type" value="Genomic_DNA"/>
</dbReference>
<dbReference type="RefSeq" id="WP_011679477.1">
    <property type="nucleotide sequence ID" value="NC_008531.1"/>
</dbReference>
<dbReference type="SMR" id="Q03YD3"/>
<dbReference type="EnsemblBacteria" id="ABJ61789">
    <property type="protein sequence ID" value="ABJ61789"/>
    <property type="gene ID" value="LEUM_0679"/>
</dbReference>
<dbReference type="GeneID" id="29577140"/>
<dbReference type="KEGG" id="lme:LEUM_0679"/>
<dbReference type="eggNOG" id="COG0061">
    <property type="taxonomic scope" value="Bacteria"/>
</dbReference>
<dbReference type="HOGENOM" id="CLU_008831_0_3_9"/>
<dbReference type="Proteomes" id="UP000000362">
    <property type="component" value="Chromosome"/>
</dbReference>
<dbReference type="GO" id="GO:0005737">
    <property type="term" value="C:cytoplasm"/>
    <property type="evidence" value="ECO:0007669"/>
    <property type="project" value="UniProtKB-SubCell"/>
</dbReference>
<dbReference type="GO" id="GO:0005524">
    <property type="term" value="F:ATP binding"/>
    <property type="evidence" value="ECO:0007669"/>
    <property type="project" value="UniProtKB-KW"/>
</dbReference>
<dbReference type="GO" id="GO:0046872">
    <property type="term" value="F:metal ion binding"/>
    <property type="evidence" value="ECO:0007669"/>
    <property type="project" value="UniProtKB-UniRule"/>
</dbReference>
<dbReference type="GO" id="GO:0051287">
    <property type="term" value="F:NAD binding"/>
    <property type="evidence" value="ECO:0007669"/>
    <property type="project" value="UniProtKB-ARBA"/>
</dbReference>
<dbReference type="GO" id="GO:0003951">
    <property type="term" value="F:NAD+ kinase activity"/>
    <property type="evidence" value="ECO:0007669"/>
    <property type="project" value="UniProtKB-UniRule"/>
</dbReference>
<dbReference type="GO" id="GO:0019674">
    <property type="term" value="P:NAD metabolic process"/>
    <property type="evidence" value="ECO:0007669"/>
    <property type="project" value="InterPro"/>
</dbReference>
<dbReference type="GO" id="GO:0006741">
    <property type="term" value="P:NADP biosynthetic process"/>
    <property type="evidence" value="ECO:0007669"/>
    <property type="project" value="UniProtKB-UniRule"/>
</dbReference>
<dbReference type="Gene3D" id="3.40.50.10330">
    <property type="entry name" value="Probable inorganic polyphosphate/atp-NAD kinase, domain 1"/>
    <property type="match status" value="1"/>
</dbReference>
<dbReference type="Gene3D" id="2.60.200.30">
    <property type="entry name" value="Probable inorganic polyphosphate/atp-NAD kinase, domain 2"/>
    <property type="match status" value="1"/>
</dbReference>
<dbReference type="HAMAP" id="MF_00361">
    <property type="entry name" value="NAD_kinase"/>
    <property type="match status" value="1"/>
</dbReference>
<dbReference type="InterPro" id="IPR017438">
    <property type="entry name" value="ATP-NAD_kinase_N"/>
</dbReference>
<dbReference type="InterPro" id="IPR017437">
    <property type="entry name" value="ATP-NAD_kinase_PpnK-typ_C"/>
</dbReference>
<dbReference type="InterPro" id="IPR016064">
    <property type="entry name" value="NAD/diacylglycerol_kinase_sf"/>
</dbReference>
<dbReference type="InterPro" id="IPR002504">
    <property type="entry name" value="NADK"/>
</dbReference>
<dbReference type="NCBIfam" id="NF003424">
    <property type="entry name" value="PRK04885.1"/>
    <property type="match status" value="1"/>
</dbReference>
<dbReference type="PANTHER" id="PTHR20275">
    <property type="entry name" value="NAD KINASE"/>
    <property type="match status" value="1"/>
</dbReference>
<dbReference type="PANTHER" id="PTHR20275:SF0">
    <property type="entry name" value="NAD KINASE"/>
    <property type="match status" value="1"/>
</dbReference>
<dbReference type="Pfam" id="PF01513">
    <property type="entry name" value="NAD_kinase"/>
    <property type="match status" value="1"/>
</dbReference>
<dbReference type="Pfam" id="PF20143">
    <property type="entry name" value="NAD_kinase_C"/>
    <property type="match status" value="1"/>
</dbReference>
<dbReference type="SUPFAM" id="SSF111331">
    <property type="entry name" value="NAD kinase/diacylglycerol kinase-like"/>
    <property type="match status" value="1"/>
</dbReference>
<comment type="function">
    <text evidence="1">Involved in the regulation of the intracellular balance of NAD and NADP, and is a key enzyme in the biosynthesis of NADP. Catalyzes specifically the phosphorylation on 2'-hydroxyl of the adenosine moiety of NAD to yield NADP.</text>
</comment>
<comment type="catalytic activity">
    <reaction evidence="1">
        <text>NAD(+) + ATP = ADP + NADP(+) + H(+)</text>
        <dbReference type="Rhea" id="RHEA:18629"/>
        <dbReference type="ChEBI" id="CHEBI:15378"/>
        <dbReference type="ChEBI" id="CHEBI:30616"/>
        <dbReference type="ChEBI" id="CHEBI:57540"/>
        <dbReference type="ChEBI" id="CHEBI:58349"/>
        <dbReference type="ChEBI" id="CHEBI:456216"/>
        <dbReference type="EC" id="2.7.1.23"/>
    </reaction>
</comment>
<comment type="cofactor">
    <cofactor evidence="1">
        <name>a divalent metal cation</name>
        <dbReference type="ChEBI" id="CHEBI:60240"/>
    </cofactor>
</comment>
<comment type="subcellular location">
    <subcellularLocation>
        <location evidence="1">Cytoplasm</location>
    </subcellularLocation>
</comment>
<comment type="similarity">
    <text evidence="1">Belongs to the NAD kinase family.</text>
</comment>